<accession>P63216</accession>
<accession>P29798</accession>
<accession>Q61014</accession>
<gene>
    <name type="primary">Gng3</name>
    <name type="synonym">Gngt3</name>
</gene>
<protein>
    <recommendedName>
        <fullName>Guanine nucleotide-binding protein G(I)/G(S)/G(O) subunit gamma-3</fullName>
    </recommendedName>
</protein>
<organism>
    <name type="scientific">Mus musculus</name>
    <name type="common">Mouse</name>
    <dbReference type="NCBI Taxonomy" id="10090"/>
    <lineage>
        <taxon>Eukaryota</taxon>
        <taxon>Metazoa</taxon>
        <taxon>Chordata</taxon>
        <taxon>Craniata</taxon>
        <taxon>Vertebrata</taxon>
        <taxon>Euteleostomi</taxon>
        <taxon>Mammalia</taxon>
        <taxon>Eutheria</taxon>
        <taxon>Euarchontoglires</taxon>
        <taxon>Glires</taxon>
        <taxon>Rodentia</taxon>
        <taxon>Myomorpha</taxon>
        <taxon>Muroidea</taxon>
        <taxon>Muridae</taxon>
        <taxon>Murinae</taxon>
        <taxon>Mus</taxon>
        <taxon>Mus</taxon>
    </lineage>
</organism>
<reference key="1">
    <citation type="journal article" date="1995" name="Biochem. Biophys. Res. Commun.">
        <title>A brain-specific G protein gamma subunit.</title>
        <authorList>
            <person name="Kalyanaraman S."/>
            <person name="Kalyanaraman V."/>
            <person name="Gautam N."/>
        </authorList>
    </citation>
    <scope>NUCLEOTIDE SEQUENCE</scope>
    <source>
        <tissue>Brain</tissue>
    </source>
</reference>
<reference key="2">
    <citation type="journal article" date="1998" name="Genomics">
        <title>Structure and mapping of the G protein gamma3 subunit gene and a divergently transcribed novel gene, Gng3lg.</title>
        <authorList>
            <person name="Downes G.B."/>
            <person name="Copeland N.G."/>
            <person name="Jenkins N.A."/>
            <person name="Gautam N."/>
        </authorList>
    </citation>
    <scope>NUCLEOTIDE SEQUENCE [GENOMIC DNA]</scope>
</reference>
<reference key="3">
    <citation type="journal article" date="2005" name="Science">
        <title>The transcriptional landscape of the mammalian genome.</title>
        <authorList>
            <person name="Carninci P."/>
            <person name="Kasukawa T."/>
            <person name="Katayama S."/>
            <person name="Gough J."/>
            <person name="Frith M.C."/>
            <person name="Maeda N."/>
            <person name="Oyama R."/>
            <person name="Ravasi T."/>
            <person name="Lenhard B."/>
            <person name="Wells C."/>
            <person name="Kodzius R."/>
            <person name="Shimokawa K."/>
            <person name="Bajic V.B."/>
            <person name="Brenner S.E."/>
            <person name="Batalov S."/>
            <person name="Forrest A.R."/>
            <person name="Zavolan M."/>
            <person name="Davis M.J."/>
            <person name="Wilming L.G."/>
            <person name="Aidinis V."/>
            <person name="Allen J.E."/>
            <person name="Ambesi-Impiombato A."/>
            <person name="Apweiler R."/>
            <person name="Aturaliya R.N."/>
            <person name="Bailey T.L."/>
            <person name="Bansal M."/>
            <person name="Baxter L."/>
            <person name="Beisel K.W."/>
            <person name="Bersano T."/>
            <person name="Bono H."/>
            <person name="Chalk A.M."/>
            <person name="Chiu K.P."/>
            <person name="Choudhary V."/>
            <person name="Christoffels A."/>
            <person name="Clutterbuck D.R."/>
            <person name="Crowe M.L."/>
            <person name="Dalla E."/>
            <person name="Dalrymple B.P."/>
            <person name="de Bono B."/>
            <person name="Della Gatta G."/>
            <person name="di Bernardo D."/>
            <person name="Down T."/>
            <person name="Engstrom P."/>
            <person name="Fagiolini M."/>
            <person name="Faulkner G."/>
            <person name="Fletcher C.F."/>
            <person name="Fukushima T."/>
            <person name="Furuno M."/>
            <person name="Futaki S."/>
            <person name="Gariboldi M."/>
            <person name="Georgii-Hemming P."/>
            <person name="Gingeras T.R."/>
            <person name="Gojobori T."/>
            <person name="Green R.E."/>
            <person name="Gustincich S."/>
            <person name="Harbers M."/>
            <person name="Hayashi Y."/>
            <person name="Hensch T.K."/>
            <person name="Hirokawa N."/>
            <person name="Hill D."/>
            <person name="Huminiecki L."/>
            <person name="Iacono M."/>
            <person name="Ikeo K."/>
            <person name="Iwama A."/>
            <person name="Ishikawa T."/>
            <person name="Jakt M."/>
            <person name="Kanapin A."/>
            <person name="Katoh M."/>
            <person name="Kawasawa Y."/>
            <person name="Kelso J."/>
            <person name="Kitamura H."/>
            <person name="Kitano H."/>
            <person name="Kollias G."/>
            <person name="Krishnan S.P."/>
            <person name="Kruger A."/>
            <person name="Kummerfeld S.K."/>
            <person name="Kurochkin I.V."/>
            <person name="Lareau L.F."/>
            <person name="Lazarevic D."/>
            <person name="Lipovich L."/>
            <person name="Liu J."/>
            <person name="Liuni S."/>
            <person name="McWilliam S."/>
            <person name="Madan Babu M."/>
            <person name="Madera M."/>
            <person name="Marchionni L."/>
            <person name="Matsuda H."/>
            <person name="Matsuzawa S."/>
            <person name="Miki H."/>
            <person name="Mignone F."/>
            <person name="Miyake S."/>
            <person name="Morris K."/>
            <person name="Mottagui-Tabar S."/>
            <person name="Mulder N."/>
            <person name="Nakano N."/>
            <person name="Nakauchi H."/>
            <person name="Ng P."/>
            <person name="Nilsson R."/>
            <person name="Nishiguchi S."/>
            <person name="Nishikawa S."/>
            <person name="Nori F."/>
            <person name="Ohara O."/>
            <person name="Okazaki Y."/>
            <person name="Orlando V."/>
            <person name="Pang K.C."/>
            <person name="Pavan W.J."/>
            <person name="Pavesi G."/>
            <person name="Pesole G."/>
            <person name="Petrovsky N."/>
            <person name="Piazza S."/>
            <person name="Reed J."/>
            <person name="Reid J.F."/>
            <person name="Ring B.Z."/>
            <person name="Ringwald M."/>
            <person name="Rost B."/>
            <person name="Ruan Y."/>
            <person name="Salzberg S.L."/>
            <person name="Sandelin A."/>
            <person name="Schneider C."/>
            <person name="Schoenbach C."/>
            <person name="Sekiguchi K."/>
            <person name="Semple C.A."/>
            <person name="Seno S."/>
            <person name="Sessa L."/>
            <person name="Sheng Y."/>
            <person name="Shibata Y."/>
            <person name="Shimada H."/>
            <person name="Shimada K."/>
            <person name="Silva D."/>
            <person name="Sinclair B."/>
            <person name="Sperling S."/>
            <person name="Stupka E."/>
            <person name="Sugiura K."/>
            <person name="Sultana R."/>
            <person name="Takenaka Y."/>
            <person name="Taki K."/>
            <person name="Tammoja K."/>
            <person name="Tan S.L."/>
            <person name="Tang S."/>
            <person name="Taylor M.S."/>
            <person name="Tegner J."/>
            <person name="Teichmann S.A."/>
            <person name="Ueda H.R."/>
            <person name="van Nimwegen E."/>
            <person name="Verardo R."/>
            <person name="Wei C.L."/>
            <person name="Yagi K."/>
            <person name="Yamanishi H."/>
            <person name="Zabarovsky E."/>
            <person name="Zhu S."/>
            <person name="Zimmer A."/>
            <person name="Hide W."/>
            <person name="Bult C."/>
            <person name="Grimmond S.M."/>
            <person name="Teasdale R.D."/>
            <person name="Liu E.T."/>
            <person name="Brusic V."/>
            <person name="Quackenbush J."/>
            <person name="Wahlestedt C."/>
            <person name="Mattick J.S."/>
            <person name="Hume D.A."/>
            <person name="Kai C."/>
            <person name="Sasaki D."/>
            <person name="Tomaru Y."/>
            <person name="Fukuda S."/>
            <person name="Kanamori-Katayama M."/>
            <person name="Suzuki M."/>
            <person name="Aoki J."/>
            <person name="Arakawa T."/>
            <person name="Iida J."/>
            <person name="Imamura K."/>
            <person name="Itoh M."/>
            <person name="Kato T."/>
            <person name="Kawaji H."/>
            <person name="Kawagashira N."/>
            <person name="Kawashima T."/>
            <person name="Kojima M."/>
            <person name="Kondo S."/>
            <person name="Konno H."/>
            <person name="Nakano K."/>
            <person name="Ninomiya N."/>
            <person name="Nishio T."/>
            <person name="Okada M."/>
            <person name="Plessy C."/>
            <person name="Shibata K."/>
            <person name="Shiraki T."/>
            <person name="Suzuki S."/>
            <person name="Tagami M."/>
            <person name="Waki K."/>
            <person name="Watahiki A."/>
            <person name="Okamura-Oho Y."/>
            <person name="Suzuki H."/>
            <person name="Kawai J."/>
            <person name="Hayashizaki Y."/>
        </authorList>
    </citation>
    <scope>NUCLEOTIDE SEQUENCE [LARGE SCALE MRNA]</scope>
    <source>
        <strain>C57BL/6J</strain>
        <tissue>Cerebellum</tissue>
    </source>
</reference>
<reference key="4">
    <citation type="journal article" date="2004" name="Genome Res.">
        <title>The status, quality, and expansion of the NIH full-length cDNA project: the Mammalian Gene Collection (MGC).</title>
        <authorList>
            <consortium name="The MGC Project Team"/>
        </authorList>
    </citation>
    <scope>NUCLEOTIDE SEQUENCE [LARGE SCALE MRNA]</scope>
    <source>
        <tissue>Eye</tissue>
    </source>
</reference>
<reference key="5">
    <citation type="submission" date="2007-04" db="UniProtKB">
        <authorList>
            <person name="Lubec G."/>
            <person name="Kang S.U."/>
        </authorList>
    </citation>
    <scope>PROTEIN SEQUENCE OF 1-17 AND 25-31</scope>
    <scope>IDENTIFICATION BY MASS SPECTROMETRY</scope>
    <source>
        <strain>C57BL/6J</strain>
        <tissue>Brain</tissue>
    </source>
</reference>
<reference key="6">
    <citation type="journal article" date="1996" name="Mol. Reprod. Dev.">
        <title>G protein gene expression during mouse oocyte growth and maturation, and preimplantation embryo development.</title>
        <authorList>
            <person name="Williams C.J."/>
            <person name="Schultz R.M."/>
            <person name="Kopf G.S."/>
        </authorList>
    </citation>
    <scope>NUCLEOTIDE SEQUENCE [MRNA] OF 13-68</scope>
    <source>
        <strain>CF-1 / Harlan</strain>
    </source>
</reference>
<reference key="7">
    <citation type="journal article" date="2007" name="Mol. Cell. Proteomics">
        <title>Qualitative and quantitative analyses of protein phosphorylation in naive and stimulated mouse synaptosomal preparations.</title>
        <authorList>
            <person name="Munton R.P."/>
            <person name="Tweedie-Cullen R."/>
            <person name="Livingstone-Zatchej M."/>
            <person name="Weinandy F."/>
            <person name="Waidelich M."/>
            <person name="Longo D."/>
            <person name="Gehrig P."/>
            <person name="Potthast F."/>
            <person name="Rutishauser D."/>
            <person name="Gerrits B."/>
            <person name="Panse C."/>
            <person name="Schlapbach R."/>
            <person name="Mansuy I.M."/>
        </authorList>
    </citation>
    <scope>IDENTIFICATION BY MASS SPECTROMETRY [LARGE SCALE ANALYSIS]</scope>
    <source>
        <tissue>Brain cortex</tissue>
    </source>
</reference>
<reference key="8">
    <citation type="journal article" date="2010" name="Cell">
        <title>A tissue-specific atlas of mouse protein phosphorylation and expression.</title>
        <authorList>
            <person name="Huttlin E.L."/>
            <person name="Jedrychowski M.P."/>
            <person name="Elias J.E."/>
            <person name="Goswami T."/>
            <person name="Rad R."/>
            <person name="Beausoleil S.A."/>
            <person name="Villen J."/>
            <person name="Haas W."/>
            <person name="Sowa M.E."/>
            <person name="Gygi S.P."/>
        </authorList>
    </citation>
    <scope>PHOSPHORYLATION [LARGE SCALE ANALYSIS] AT THR-5; SER-9; THR-10 AND SER-12</scope>
    <scope>IDENTIFICATION BY MASS SPECTROMETRY [LARGE SCALE ANALYSIS]</scope>
    <source>
        <tissue>Brain</tissue>
    </source>
</reference>
<dbReference type="EMBL" id="AF069953">
    <property type="protein sequence ID" value="AAC83941.1"/>
    <property type="molecule type" value="Genomic_DNA"/>
</dbReference>
<dbReference type="EMBL" id="AK004459">
    <property type="protein sequence ID" value="BAB23313.1"/>
    <property type="molecule type" value="mRNA"/>
</dbReference>
<dbReference type="EMBL" id="AK032646">
    <property type="protein sequence ID" value="BAC27969.1"/>
    <property type="molecule type" value="mRNA"/>
</dbReference>
<dbReference type="EMBL" id="BC029680">
    <property type="protein sequence ID" value="AAH29680.1"/>
    <property type="molecule type" value="mRNA"/>
</dbReference>
<dbReference type="EMBL" id="U38497">
    <property type="protein sequence ID" value="AAB01728.1"/>
    <property type="molecule type" value="mRNA"/>
</dbReference>
<dbReference type="CCDS" id="CCDS29550.1"/>
<dbReference type="PIR" id="JC4340">
    <property type="entry name" value="JC4340"/>
</dbReference>
<dbReference type="RefSeq" id="NP_034446.1">
    <property type="nucleotide sequence ID" value="NM_010316.3"/>
</dbReference>
<dbReference type="SMR" id="P63216"/>
<dbReference type="BioGRID" id="199988">
    <property type="interactions" value="8"/>
</dbReference>
<dbReference type="FunCoup" id="P63216">
    <property type="interactions" value="798"/>
</dbReference>
<dbReference type="IntAct" id="P63216">
    <property type="interactions" value="1"/>
</dbReference>
<dbReference type="STRING" id="10090.ENSMUSP00000093978"/>
<dbReference type="iPTMnet" id="P63216"/>
<dbReference type="PhosphoSitePlus" id="P63216"/>
<dbReference type="SwissPalm" id="P63216"/>
<dbReference type="PaxDb" id="10090-ENSMUSP00000093978"/>
<dbReference type="PeptideAtlas" id="P63216"/>
<dbReference type="ProteomicsDB" id="267768"/>
<dbReference type="Antibodypedia" id="28689">
    <property type="antibodies" value="92 antibodies from 21 providers"/>
</dbReference>
<dbReference type="DNASU" id="14704"/>
<dbReference type="Ensembl" id="ENSMUST00000096259.6">
    <property type="protein sequence ID" value="ENSMUSP00000093978.5"/>
    <property type="gene ID" value="ENSMUSG00000071658.6"/>
</dbReference>
<dbReference type="GeneID" id="14704"/>
<dbReference type="KEGG" id="mmu:14704"/>
<dbReference type="UCSC" id="uc008gnh.1">
    <property type="organism name" value="mouse"/>
</dbReference>
<dbReference type="AGR" id="MGI:102704"/>
<dbReference type="CTD" id="2785"/>
<dbReference type="MGI" id="MGI:102704">
    <property type="gene designation" value="Gng3"/>
</dbReference>
<dbReference type="VEuPathDB" id="HostDB:ENSMUSG00000071658"/>
<dbReference type="eggNOG" id="KOG4119">
    <property type="taxonomic scope" value="Eukaryota"/>
</dbReference>
<dbReference type="GeneTree" id="ENSGT01100000263497"/>
<dbReference type="HOGENOM" id="CLU_168377_0_1_1"/>
<dbReference type="InParanoid" id="P63216"/>
<dbReference type="OMA" id="YCDAHTC"/>
<dbReference type="OrthoDB" id="6264244at2759"/>
<dbReference type="PhylomeDB" id="P63216"/>
<dbReference type="TreeFam" id="TF319909"/>
<dbReference type="Reactome" id="R-MMU-1296041">
    <property type="pathway name" value="Activation of G protein gated Potassium channels"/>
</dbReference>
<dbReference type="Reactome" id="R-MMU-202040">
    <property type="pathway name" value="G-protein activation"/>
</dbReference>
<dbReference type="Reactome" id="R-MMU-381676">
    <property type="pathway name" value="Glucagon-like Peptide-1 (GLP1) regulates insulin secretion"/>
</dbReference>
<dbReference type="Reactome" id="R-MMU-392170">
    <property type="pathway name" value="ADP signalling through P2Y purinoceptor 12"/>
</dbReference>
<dbReference type="Reactome" id="R-MMU-392451">
    <property type="pathway name" value="G beta:gamma signalling through PI3Kgamma"/>
</dbReference>
<dbReference type="Reactome" id="R-MMU-392851">
    <property type="pathway name" value="Prostacyclin signalling through prostacyclin receptor"/>
</dbReference>
<dbReference type="Reactome" id="R-MMU-400042">
    <property type="pathway name" value="Adrenaline,noradrenaline inhibits insulin secretion"/>
</dbReference>
<dbReference type="Reactome" id="R-MMU-4086398">
    <property type="pathway name" value="Ca2+ pathway"/>
</dbReference>
<dbReference type="Reactome" id="R-MMU-416476">
    <property type="pathway name" value="G alpha (q) signalling events"/>
</dbReference>
<dbReference type="Reactome" id="R-MMU-416482">
    <property type="pathway name" value="G alpha (12/13) signalling events"/>
</dbReference>
<dbReference type="Reactome" id="R-MMU-418217">
    <property type="pathway name" value="G beta:gamma signalling through PLC beta"/>
</dbReference>
<dbReference type="Reactome" id="R-MMU-418555">
    <property type="pathway name" value="G alpha (s) signalling events"/>
</dbReference>
<dbReference type="Reactome" id="R-MMU-418592">
    <property type="pathway name" value="ADP signalling through P2Y purinoceptor 1"/>
</dbReference>
<dbReference type="Reactome" id="R-MMU-418594">
    <property type="pathway name" value="G alpha (i) signalling events"/>
</dbReference>
<dbReference type="Reactome" id="R-MMU-418597">
    <property type="pathway name" value="G alpha (z) signalling events"/>
</dbReference>
<dbReference type="Reactome" id="R-MMU-420092">
    <property type="pathway name" value="Glucagon-type ligand receptors"/>
</dbReference>
<dbReference type="Reactome" id="R-MMU-428930">
    <property type="pathway name" value="Thromboxane signalling through TP receptor"/>
</dbReference>
<dbReference type="Reactome" id="R-MMU-432040">
    <property type="pathway name" value="Vasopressin regulates renal water homeostasis via Aquaporins"/>
</dbReference>
<dbReference type="Reactome" id="R-MMU-456926">
    <property type="pathway name" value="Thrombin signalling through proteinase activated receptors (PARs)"/>
</dbReference>
<dbReference type="Reactome" id="R-MMU-500657">
    <property type="pathway name" value="Presynaptic function of Kainate receptors"/>
</dbReference>
<dbReference type="Reactome" id="R-MMU-6814122">
    <property type="pathway name" value="Cooperation of PDCL (PhLP1) and TRiC/CCT in G-protein beta folding"/>
</dbReference>
<dbReference type="Reactome" id="R-MMU-8964315">
    <property type="pathway name" value="G beta:gamma signalling through BTK"/>
</dbReference>
<dbReference type="Reactome" id="R-MMU-8964616">
    <property type="pathway name" value="G beta:gamma signalling through CDC42"/>
</dbReference>
<dbReference type="Reactome" id="R-MMU-9009391">
    <property type="pathway name" value="Extra-nuclear estrogen signaling"/>
</dbReference>
<dbReference type="Reactome" id="R-MMU-9634597">
    <property type="pathway name" value="GPER1 signaling"/>
</dbReference>
<dbReference type="Reactome" id="R-MMU-9856530">
    <property type="pathway name" value="High laminar flow shear stress activates signaling by PIEZO1 and PECAM1:CDH5:KDR in endothelial cells"/>
</dbReference>
<dbReference type="Reactome" id="R-MMU-997272">
    <property type="pathway name" value="Inhibition of voltage gated Ca2+ channels via Gbeta/gamma subunits"/>
</dbReference>
<dbReference type="BioGRID-ORCS" id="14704">
    <property type="hits" value="1 hit in 76 CRISPR screens"/>
</dbReference>
<dbReference type="CD-CODE" id="CE726F99">
    <property type="entry name" value="Postsynaptic density"/>
</dbReference>
<dbReference type="ChiTaRS" id="Gng3">
    <property type="organism name" value="mouse"/>
</dbReference>
<dbReference type="PRO" id="PR:P63216"/>
<dbReference type="Proteomes" id="UP000000589">
    <property type="component" value="Chromosome 19"/>
</dbReference>
<dbReference type="RNAct" id="P63216">
    <property type="molecule type" value="protein"/>
</dbReference>
<dbReference type="Bgee" id="ENSMUSG00000071658">
    <property type="expression patterns" value="Expressed in perirhinal cortex and 180 other cell types or tissues"/>
</dbReference>
<dbReference type="GO" id="GO:0044297">
    <property type="term" value="C:cell body"/>
    <property type="evidence" value="ECO:0000314"/>
    <property type="project" value="MGI"/>
</dbReference>
<dbReference type="GO" id="GO:0030425">
    <property type="term" value="C:dendrite"/>
    <property type="evidence" value="ECO:0000314"/>
    <property type="project" value="MGI"/>
</dbReference>
<dbReference type="GO" id="GO:0005834">
    <property type="term" value="C:heterotrimeric G-protein complex"/>
    <property type="evidence" value="ECO:0000247"/>
    <property type="project" value="MGI"/>
</dbReference>
<dbReference type="GO" id="GO:0014069">
    <property type="term" value="C:postsynaptic density"/>
    <property type="evidence" value="ECO:0000314"/>
    <property type="project" value="MGI"/>
</dbReference>
<dbReference type="GO" id="GO:0045202">
    <property type="term" value="C:synapse"/>
    <property type="evidence" value="ECO:0000314"/>
    <property type="project" value="SynGO"/>
</dbReference>
<dbReference type="GO" id="GO:0031681">
    <property type="term" value="F:G-protein beta-subunit binding"/>
    <property type="evidence" value="ECO:0007669"/>
    <property type="project" value="InterPro"/>
</dbReference>
<dbReference type="GO" id="GO:0003924">
    <property type="term" value="F:GTPase activity"/>
    <property type="evidence" value="ECO:0000247"/>
    <property type="project" value="MGI"/>
</dbReference>
<dbReference type="GO" id="GO:0007186">
    <property type="term" value="P:G protein-coupled receptor signaling pathway"/>
    <property type="evidence" value="ECO:0000266"/>
    <property type="project" value="MGI"/>
</dbReference>
<dbReference type="GO" id="GO:0007204">
    <property type="term" value="P:positive regulation of cytosolic calcium ion concentration"/>
    <property type="evidence" value="ECO:0007669"/>
    <property type="project" value="Ensembl"/>
</dbReference>
<dbReference type="CDD" id="cd00068">
    <property type="entry name" value="GGL"/>
    <property type="match status" value="1"/>
</dbReference>
<dbReference type="FunFam" id="4.10.260.10:FF:000001">
    <property type="entry name" value="Guanine nucleotide-binding protein subunit gamma"/>
    <property type="match status" value="1"/>
</dbReference>
<dbReference type="Gene3D" id="4.10.260.10">
    <property type="entry name" value="Transducin (heterotrimeric G protein), gamma chain"/>
    <property type="match status" value="1"/>
</dbReference>
<dbReference type="InterPro" id="IPR015898">
    <property type="entry name" value="G-protein_gamma-like_dom"/>
</dbReference>
<dbReference type="InterPro" id="IPR036284">
    <property type="entry name" value="GGL_sf"/>
</dbReference>
<dbReference type="InterPro" id="IPR001770">
    <property type="entry name" value="Gprotein-gamma"/>
</dbReference>
<dbReference type="PANTHER" id="PTHR13809">
    <property type="entry name" value="GUANINE NUCLEOTIDE-BINDING PROTEIN GAMMA SUBUNIT"/>
    <property type="match status" value="1"/>
</dbReference>
<dbReference type="Pfam" id="PF00631">
    <property type="entry name" value="G-gamma"/>
    <property type="match status" value="1"/>
</dbReference>
<dbReference type="PRINTS" id="PR00321">
    <property type="entry name" value="GPROTEING"/>
</dbReference>
<dbReference type="SMART" id="SM01224">
    <property type="entry name" value="G_gamma"/>
    <property type="match status" value="1"/>
</dbReference>
<dbReference type="SMART" id="SM00224">
    <property type="entry name" value="GGL"/>
    <property type="match status" value="1"/>
</dbReference>
<dbReference type="SUPFAM" id="SSF48670">
    <property type="entry name" value="Transducin (heterotrimeric G protein), gamma chain"/>
    <property type="match status" value="1"/>
</dbReference>
<dbReference type="PROSITE" id="PS50058">
    <property type="entry name" value="G_PROTEIN_GAMMA"/>
    <property type="match status" value="1"/>
</dbReference>
<sequence length="75" mass="8305">MKGETPVNSTMSIGQARKMVEQLKIEASLCRIKVSKAAADLMTYCDAHACEDPLITPVPTSENPFREKKFFCALL</sequence>
<feature type="chain" id="PRO_0000012619" description="Guanine nucleotide-binding protein G(I)/G(S)/G(O) subunit gamma-3">
    <location>
        <begin position="1"/>
        <end position="72"/>
    </location>
</feature>
<feature type="propeptide" id="PRO_0000012620" description="Removed in mature form" evidence="1">
    <location>
        <begin position="73"/>
        <end position="75"/>
    </location>
</feature>
<feature type="modified residue" description="Phosphothreonine" evidence="4">
    <location>
        <position position="5"/>
    </location>
</feature>
<feature type="modified residue" description="Phosphoserine" evidence="4">
    <location>
        <position position="9"/>
    </location>
</feature>
<feature type="modified residue" description="Phosphothreonine" evidence="4">
    <location>
        <position position="10"/>
    </location>
</feature>
<feature type="modified residue" description="Phosphoserine" evidence="4">
    <location>
        <position position="12"/>
    </location>
</feature>
<feature type="modified residue" description="Cysteine methyl ester" evidence="1">
    <location>
        <position position="72"/>
    </location>
</feature>
<feature type="lipid moiety-binding region" description="S-geranylgeranyl cysteine" evidence="1">
    <location>
        <position position="72"/>
    </location>
</feature>
<evidence type="ECO:0000250" key="1"/>
<evidence type="ECO:0000250" key="2">
    <source>
        <dbReference type="UniProtKB" id="P63215"/>
    </source>
</evidence>
<evidence type="ECO:0000305" key="3"/>
<evidence type="ECO:0007744" key="4">
    <source>
    </source>
</evidence>
<comment type="function">
    <text>Guanine nucleotide-binding proteins (G proteins) are involved as a modulator or transducer in various transmembrane signaling systems. The beta and gamma chains are required for the GTPase activity, for replacement of GDP by GTP, and for G protein-effector interaction.</text>
</comment>
<comment type="subunit">
    <text evidence="2">G proteins are composed of 3 units, alpha, beta and gamma. Forms a complex with GNAO1 and GNB1. Interacts with SCN8A.</text>
</comment>
<comment type="subcellular location">
    <subcellularLocation>
        <location evidence="3">Cell membrane</location>
        <topology evidence="3">Lipid-anchor</topology>
        <orientation evidence="3">Cytoplasmic side</orientation>
    </subcellularLocation>
</comment>
<comment type="tissue specificity">
    <text>Abundantly expressed in brain. Low levels in testis.</text>
</comment>
<comment type="similarity">
    <text evidence="3">Belongs to the G protein gamma family.</text>
</comment>
<name>GBG3_MOUSE</name>
<proteinExistence type="evidence at protein level"/>
<keyword id="KW-1003">Cell membrane</keyword>
<keyword id="KW-0903">Direct protein sequencing</keyword>
<keyword id="KW-0449">Lipoprotein</keyword>
<keyword id="KW-0472">Membrane</keyword>
<keyword id="KW-0488">Methylation</keyword>
<keyword id="KW-0597">Phosphoprotein</keyword>
<keyword id="KW-0636">Prenylation</keyword>
<keyword id="KW-1185">Reference proteome</keyword>
<keyword id="KW-0807">Transducer</keyword>